<feature type="chain" id="PRO_0000369309" description="Molybdopterin synthase sulfur carrier subunit">
    <location>
        <begin position="1"/>
        <end position="91"/>
    </location>
</feature>
<feature type="modified residue" description="1-thioglycine; alternate" evidence="1">
    <location>
        <position position="91"/>
    </location>
</feature>
<feature type="modified residue" description="Glycyl adenylate; alternate" evidence="1">
    <location>
        <position position="91"/>
    </location>
</feature>
<protein>
    <recommendedName>
        <fullName evidence="1">Molybdopterin synthase sulfur carrier subunit</fullName>
    </recommendedName>
    <alternativeName>
        <fullName evidence="1">Molybdenum cofactor synthesis protein 2 small subunit</fullName>
    </alternativeName>
    <alternativeName>
        <fullName evidence="1">Molybdenum cofactor synthesis protein 2A</fullName>
        <shortName evidence="1">MOCS2A</shortName>
    </alternativeName>
    <alternativeName>
        <fullName evidence="1">Sulfur carrier protein MOCS2A</fullName>
    </alternativeName>
</protein>
<evidence type="ECO:0000255" key="1">
    <source>
        <dbReference type="HAMAP-Rule" id="MF_03051"/>
    </source>
</evidence>
<dbReference type="EMBL" id="AAAB01008898">
    <property type="protein sequence ID" value="EAL40503.1"/>
    <property type="molecule type" value="Genomic_DNA"/>
</dbReference>
<dbReference type="RefSeq" id="XP_313564.4">
    <property type="nucleotide sequence ID" value="XM_313564.4"/>
</dbReference>
<dbReference type="SMR" id="Q5TT27"/>
<dbReference type="FunCoup" id="Q5TT27">
    <property type="interactions" value="13"/>
</dbReference>
<dbReference type="STRING" id="7165.Q5TT27"/>
<dbReference type="PaxDb" id="7165-AGAP004289-PA"/>
<dbReference type="EnsemblMetazoa" id="AGAP004289-RA">
    <property type="protein sequence ID" value="AGAP004289-PA"/>
    <property type="gene ID" value="AGAP004289"/>
</dbReference>
<dbReference type="EnsemblMetazoa" id="AGAP004290-RA">
    <property type="protein sequence ID" value="AGAP004290-PA"/>
    <property type="gene ID" value="AGAP004290"/>
</dbReference>
<dbReference type="GeneID" id="3290998"/>
<dbReference type="KEGG" id="aga:3290998"/>
<dbReference type="CTD" id="8674021"/>
<dbReference type="VEuPathDB" id="VectorBase:AGAMI1_004357"/>
<dbReference type="VEuPathDB" id="VectorBase:AGAP004289"/>
<dbReference type="VEuPathDB" id="VectorBase:AGAP004290"/>
<dbReference type="eggNOG" id="KOG3474">
    <property type="taxonomic scope" value="Eukaryota"/>
</dbReference>
<dbReference type="HOGENOM" id="CLU_114601_4_3_1"/>
<dbReference type="InParanoid" id="Q5TT27"/>
<dbReference type="OMA" id="HVLFFAK"/>
<dbReference type="PhylomeDB" id="Q5TT27"/>
<dbReference type="UniPathway" id="UPA00344"/>
<dbReference type="Proteomes" id="UP000007062">
    <property type="component" value="Chromosome 2R"/>
</dbReference>
<dbReference type="GO" id="GO:0005829">
    <property type="term" value="C:cytosol"/>
    <property type="evidence" value="ECO:0000250"/>
    <property type="project" value="UniProtKB"/>
</dbReference>
<dbReference type="GO" id="GO:1990133">
    <property type="term" value="C:molybdopterin adenylyltransferase complex"/>
    <property type="evidence" value="ECO:0000318"/>
    <property type="project" value="GO_Central"/>
</dbReference>
<dbReference type="GO" id="GO:1990140">
    <property type="term" value="C:molybdopterin synthase complex"/>
    <property type="evidence" value="ECO:0000250"/>
    <property type="project" value="UniProtKB"/>
</dbReference>
<dbReference type="GO" id="GO:0030366">
    <property type="term" value="F:molybdopterin synthase activity"/>
    <property type="evidence" value="ECO:0007669"/>
    <property type="project" value="UniProtKB-UniRule"/>
</dbReference>
<dbReference type="GO" id="GO:0000166">
    <property type="term" value="F:nucleotide binding"/>
    <property type="evidence" value="ECO:0007669"/>
    <property type="project" value="UniProtKB-KW"/>
</dbReference>
<dbReference type="GO" id="GO:0006777">
    <property type="term" value="P:Mo-molybdopterin cofactor biosynthetic process"/>
    <property type="evidence" value="ECO:0000250"/>
    <property type="project" value="UniProtKB"/>
</dbReference>
<dbReference type="CDD" id="cd00754">
    <property type="entry name" value="Ubl_MoaD"/>
    <property type="match status" value="1"/>
</dbReference>
<dbReference type="FunFam" id="3.10.20.30:FF:000010">
    <property type="entry name" value="Molybdopterin synthase sulfur carrier subunit"/>
    <property type="match status" value="1"/>
</dbReference>
<dbReference type="Gene3D" id="3.10.20.30">
    <property type="match status" value="1"/>
</dbReference>
<dbReference type="HAMAP" id="MF_03051">
    <property type="entry name" value="MOCS2A"/>
    <property type="match status" value="1"/>
</dbReference>
<dbReference type="InterPro" id="IPR012675">
    <property type="entry name" value="Beta-grasp_dom_sf"/>
</dbReference>
<dbReference type="InterPro" id="IPR044672">
    <property type="entry name" value="MOCS2A"/>
</dbReference>
<dbReference type="InterPro" id="IPR028887">
    <property type="entry name" value="MOCS2A_euk"/>
</dbReference>
<dbReference type="InterPro" id="IPR016155">
    <property type="entry name" value="Mopterin_synth/thiamin_S_b"/>
</dbReference>
<dbReference type="InterPro" id="IPR003749">
    <property type="entry name" value="ThiS/MoaD-like"/>
</dbReference>
<dbReference type="PANTHER" id="PTHR33359">
    <property type="entry name" value="MOLYBDOPTERIN SYNTHASE SULFUR CARRIER SUBUNIT"/>
    <property type="match status" value="1"/>
</dbReference>
<dbReference type="PANTHER" id="PTHR33359:SF1">
    <property type="entry name" value="MOLYBDOPTERIN SYNTHASE SULFUR CARRIER SUBUNIT"/>
    <property type="match status" value="1"/>
</dbReference>
<dbReference type="Pfam" id="PF02597">
    <property type="entry name" value="ThiS"/>
    <property type="match status" value="1"/>
</dbReference>
<dbReference type="SUPFAM" id="SSF54285">
    <property type="entry name" value="MoaD/ThiS"/>
    <property type="match status" value="1"/>
</dbReference>
<comment type="function">
    <text evidence="1">Acts as a sulfur carrier required for molybdopterin biosynthesis. Component of the molybdopterin synthase complex that catalyzes the conversion of precursor Z into molybdopterin by mediating the incorporation of 2 sulfur atoms into precursor Z to generate a dithiolene group. In the complex, serves as sulfur donor by being thiocarboxylated (-COSH) at its C-terminus by MOCS3. After interaction with MOCS2B, the sulfur is then transferred to precursor Z to form molybdopterin.</text>
</comment>
<comment type="pathway">
    <text evidence="1">Cofactor biosynthesis; molybdopterin biosynthesis.</text>
</comment>
<comment type="subunit">
    <text evidence="1">Heterotetramer; composed of 2 small (MOCS2A) and 2 large (MOCS2B) subunits.</text>
</comment>
<comment type="subcellular location">
    <subcellularLocation>
        <location evidence="1">Cytoplasm</location>
    </subcellularLocation>
</comment>
<comment type="PTM">
    <text evidence="1">C-terminal thiocarboxylation occurs in 2 steps, it is first acyl-adenylated (-COAMP) via the hesA/moeB/thiF part of MOCS3, then thiocarboxylated (-COSH) via the rhodanese domain of MOCS3.</text>
</comment>
<comment type="miscellaneous">
    <text>This protein is produced by a bicistronic gene which also produces the large subunit (MOCS2B).</text>
</comment>
<comment type="similarity">
    <text evidence="1">Belongs to the MoaD family. MOCS2A subfamily.</text>
</comment>
<proteinExistence type="inferred from homology"/>
<organism>
    <name type="scientific">Anopheles gambiae</name>
    <name type="common">African malaria mosquito</name>
    <dbReference type="NCBI Taxonomy" id="7165"/>
    <lineage>
        <taxon>Eukaryota</taxon>
        <taxon>Metazoa</taxon>
        <taxon>Ecdysozoa</taxon>
        <taxon>Arthropoda</taxon>
        <taxon>Hexapoda</taxon>
        <taxon>Insecta</taxon>
        <taxon>Pterygota</taxon>
        <taxon>Neoptera</taxon>
        <taxon>Endopterygota</taxon>
        <taxon>Diptera</taxon>
        <taxon>Nematocera</taxon>
        <taxon>Culicoidea</taxon>
        <taxon>Culicidae</taxon>
        <taxon>Anophelinae</taxon>
        <taxon>Anopheles</taxon>
    </lineage>
</organism>
<reference key="1">
    <citation type="journal article" date="2002" name="Science">
        <title>The genome sequence of the malaria mosquito Anopheles gambiae.</title>
        <authorList>
            <person name="Holt R.A."/>
            <person name="Subramanian G.M."/>
            <person name="Halpern A."/>
            <person name="Sutton G.G."/>
            <person name="Charlab R."/>
            <person name="Nusskern D.R."/>
            <person name="Wincker P."/>
            <person name="Clark A.G."/>
            <person name="Ribeiro J.M.C."/>
            <person name="Wides R."/>
            <person name="Salzberg S.L."/>
            <person name="Loftus B.J."/>
            <person name="Yandell M.D."/>
            <person name="Majoros W.H."/>
            <person name="Rusch D.B."/>
            <person name="Lai Z."/>
            <person name="Kraft C.L."/>
            <person name="Abril J.F."/>
            <person name="Anthouard V."/>
            <person name="Arensburger P."/>
            <person name="Atkinson P.W."/>
            <person name="Baden H."/>
            <person name="de Berardinis V."/>
            <person name="Baldwin D."/>
            <person name="Benes V."/>
            <person name="Biedler J."/>
            <person name="Blass C."/>
            <person name="Bolanos R."/>
            <person name="Boscus D."/>
            <person name="Barnstead M."/>
            <person name="Cai S."/>
            <person name="Center A."/>
            <person name="Chaturverdi K."/>
            <person name="Christophides G.K."/>
            <person name="Chrystal M.A.M."/>
            <person name="Clamp M."/>
            <person name="Cravchik A."/>
            <person name="Curwen V."/>
            <person name="Dana A."/>
            <person name="Delcher A."/>
            <person name="Dew I."/>
            <person name="Evans C.A."/>
            <person name="Flanigan M."/>
            <person name="Grundschober-Freimoser A."/>
            <person name="Friedli L."/>
            <person name="Gu Z."/>
            <person name="Guan P."/>
            <person name="Guigo R."/>
            <person name="Hillenmeyer M.E."/>
            <person name="Hladun S.L."/>
            <person name="Hogan J.R."/>
            <person name="Hong Y.S."/>
            <person name="Hoover J."/>
            <person name="Jaillon O."/>
            <person name="Ke Z."/>
            <person name="Kodira C.D."/>
            <person name="Kokoza E."/>
            <person name="Koutsos A."/>
            <person name="Letunic I."/>
            <person name="Levitsky A.A."/>
            <person name="Liang Y."/>
            <person name="Lin J.-J."/>
            <person name="Lobo N.F."/>
            <person name="Lopez J.R."/>
            <person name="Malek J.A."/>
            <person name="McIntosh T.C."/>
            <person name="Meister S."/>
            <person name="Miller J.R."/>
            <person name="Mobarry C."/>
            <person name="Mongin E."/>
            <person name="Murphy S.D."/>
            <person name="O'Brochta D.A."/>
            <person name="Pfannkoch C."/>
            <person name="Qi R."/>
            <person name="Regier M.A."/>
            <person name="Remington K."/>
            <person name="Shao H."/>
            <person name="Sharakhova M.V."/>
            <person name="Sitter C.D."/>
            <person name="Shetty J."/>
            <person name="Smith T.J."/>
            <person name="Strong R."/>
            <person name="Sun J."/>
            <person name="Thomasova D."/>
            <person name="Ton L.Q."/>
            <person name="Topalis P."/>
            <person name="Tu Z.J."/>
            <person name="Unger M.F."/>
            <person name="Walenz B."/>
            <person name="Wang A.H."/>
            <person name="Wang J."/>
            <person name="Wang M."/>
            <person name="Wang X."/>
            <person name="Woodford K.J."/>
            <person name="Wortman J.R."/>
            <person name="Wu M."/>
            <person name="Yao A."/>
            <person name="Zdobnov E.M."/>
            <person name="Zhang H."/>
            <person name="Zhao Q."/>
            <person name="Zhao S."/>
            <person name="Zhu S.C."/>
            <person name="Zhimulev I."/>
            <person name="Coluzzi M."/>
            <person name="della Torre A."/>
            <person name="Roth C.W."/>
            <person name="Louis C."/>
            <person name="Kalush F."/>
            <person name="Mural R.J."/>
            <person name="Myers E.W."/>
            <person name="Adams M.D."/>
            <person name="Smith H.O."/>
            <person name="Broder S."/>
            <person name="Gardner M.J."/>
            <person name="Fraser C.M."/>
            <person name="Birney E."/>
            <person name="Bork P."/>
            <person name="Brey P.T."/>
            <person name="Venter J.C."/>
            <person name="Weissenbach J."/>
            <person name="Kafatos F.C."/>
            <person name="Collins F.H."/>
            <person name="Hoffman S.L."/>
        </authorList>
    </citation>
    <scope>NUCLEOTIDE SEQUENCE [LARGE SCALE GENOMIC DNA]</scope>
    <source>
        <strain>PEST</strain>
    </source>
</reference>
<name>MOC2A_ANOGA</name>
<gene>
    <name evidence="1" type="primary">Mocs2</name>
    <name type="ORF">AGAP004289</name>
</gene>
<accession>Q5TT27</accession>
<sequence length="91" mass="10076">MSNTDSVRVKLLFFAKSRELAGVSGTDDFLVPHAEIKCSELLDLICNRYNLSIIRNNVILAHNEQYCADLSETIRIRNGDELAVIPPISGG</sequence>
<keyword id="KW-0963">Cytoplasm</keyword>
<keyword id="KW-0501">Molybdenum cofactor biosynthesis</keyword>
<keyword id="KW-0547">Nucleotide-binding</keyword>
<keyword id="KW-0597">Phosphoprotein</keyword>
<keyword id="KW-1185">Reference proteome</keyword>